<evidence type="ECO:0000250" key="1"/>
<evidence type="ECO:0000250" key="2">
    <source>
        <dbReference type="UniProtKB" id="P41159"/>
    </source>
</evidence>
<evidence type="ECO:0000250" key="3">
    <source>
        <dbReference type="UniProtKB" id="P41160"/>
    </source>
</evidence>
<evidence type="ECO:0000250" key="4">
    <source>
        <dbReference type="UniProtKB" id="P50596"/>
    </source>
</evidence>
<evidence type="ECO:0000255" key="5"/>
<evidence type="ECO:0000305" key="6"/>
<dbReference type="EMBL" id="AB041360">
    <property type="protein sequence ID" value="BAA95481.1"/>
    <property type="molecule type" value="mRNA"/>
</dbReference>
<dbReference type="RefSeq" id="NP_001009850.1">
    <property type="nucleotide sequence ID" value="NM_001009850.1"/>
</dbReference>
<dbReference type="RefSeq" id="XP_006929412.1">
    <property type="nucleotide sequence ID" value="XM_006929350.3"/>
</dbReference>
<dbReference type="RefSeq" id="XP_006929413.1">
    <property type="nucleotide sequence ID" value="XM_006929351.3"/>
</dbReference>
<dbReference type="RefSeq" id="XP_006929414.1">
    <property type="nucleotide sequence ID" value="XM_006929352.3"/>
</dbReference>
<dbReference type="RefSeq" id="XP_011278812.1">
    <property type="nucleotide sequence ID" value="XM_011280510.2"/>
</dbReference>
<dbReference type="SMR" id="Q9N2C1"/>
<dbReference type="FunCoup" id="Q9N2C1">
    <property type="interactions" value="6"/>
</dbReference>
<dbReference type="STRING" id="9685.ENSFCAP00000033061"/>
<dbReference type="PaxDb" id="9685-ENSFCAP00000005951"/>
<dbReference type="Ensembl" id="ENSFCAT00000038915.3">
    <property type="protein sequence ID" value="ENSFCAP00000033061.1"/>
    <property type="gene ID" value="ENSFCAG00000035912.3"/>
</dbReference>
<dbReference type="GeneID" id="493838"/>
<dbReference type="KEGG" id="fca:493838"/>
<dbReference type="CTD" id="3952"/>
<dbReference type="VGNC" id="VGNC:80609">
    <property type="gene designation" value="LEP"/>
</dbReference>
<dbReference type="eggNOG" id="ENOG502S5K5">
    <property type="taxonomic scope" value="Eukaryota"/>
</dbReference>
<dbReference type="GeneTree" id="ENSGT00390000011772"/>
<dbReference type="HOGENOM" id="CLU_132715_0_0_1"/>
<dbReference type="InParanoid" id="Q9N2C1"/>
<dbReference type="OMA" id="MRCGPLC"/>
<dbReference type="OrthoDB" id="9872512at2759"/>
<dbReference type="TreeFam" id="TF105086"/>
<dbReference type="Proteomes" id="UP000011712">
    <property type="component" value="Chromosome A2"/>
</dbReference>
<dbReference type="Bgee" id="ENSFCAG00000035912">
    <property type="expression patterns" value="Expressed in zone of skin and 2 other cell types or tissues"/>
</dbReference>
<dbReference type="GO" id="GO:0005737">
    <property type="term" value="C:cytoplasm"/>
    <property type="evidence" value="ECO:0007669"/>
    <property type="project" value="Ensembl"/>
</dbReference>
<dbReference type="GO" id="GO:0005615">
    <property type="term" value="C:extracellular space"/>
    <property type="evidence" value="ECO:0000250"/>
    <property type="project" value="HGNC-UCL"/>
</dbReference>
<dbReference type="GO" id="GO:0003677">
    <property type="term" value="F:DNA binding"/>
    <property type="evidence" value="ECO:0007669"/>
    <property type="project" value="Ensembl"/>
</dbReference>
<dbReference type="GO" id="GO:0005179">
    <property type="term" value="F:hormone activity"/>
    <property type="evidence" value="ECO:0000318"/>
    <property type="project" value="GO_Central"/>
</dbReference>
<dbReference type="GO" id="GO:1990460">
    <property type="term" value="F:leptin receptor binding"/>
    <property type="evidence" value="ECO:0007669"/>
    <property type="project" value="Ensembl"/>
</dbReference>
<dbReference type="GO" id="GO:0051428">
    <property type="term" value="F:peptide hormone receptor binding"/>
    <property type="evidence" value="ECO:0000318"/>
    <property type="project" value="GO_Central"/>
</dbReference>
<dbReference type="GO" id="GO:1990051">
    <property type="term" value="P:activation of protein kinase C activity"/>
    <property type="evidence" value="ECO:0000250"/>
    <property type="project" value="UniProtKB"/>
</dbReference>
<dbReference type="GO" id="GO:0060612">
    <property type="term" value="P:adipose tissue development"/>
    <property type="evidence" value="ECO:0007669"/>
    <property type="project" value="Ensembl"/>
</dbReference>
<dbReference type="GO" id="GO:0008343">
    <property type="term" value="P:adult feeding behavior"/>
    <property type="evidence" value="ECO:0000250"/>
    <property type="project" value="HGNC-UCL"/>
</dbReference>
<dbReference type="GO" id="GO:0001525">
    <property type="term" value="P:angiogenesis"/>
    <property type="evidence" value="ECO:0007669"/>
    <property type="project" value="Ensembl"/>
</dbReference>
<dbReference type="GO" id="GO:0035904">
    <property type="term" value="P:aorta development"/>
    <property type="evidence" value="ECO:0007669"/>
    <property type="project" value="Ensembl"/>
</dbReference>
<dbReference type="GO" id="GO:0008206">
    <property type="term" value="P:bile acid metabolic process"/>
    <property type="evidence" value="ECO:0007669"/>
    <property type="project" value="Ensembl"/>
</dbReference>
<dbReference type="GO" id="GO:0098868">
    <property type="term" value="P:bone growth"/>
    <property type="evidence" value="ECO:0000250"/>
    <property type="project" value="UniProtKB"/>
</dbReference>
<dbReference type="GO" id="GO:0007259">
    <property type="term" value="P:cell surface receptor signaling pathway via JAK-STAT"/>
    <property type="evidence" value="ECO:0007669"/>
    <property type="project" value="Ensembl"/>
</dbReference>
<dbReference type="GO" id="GO:0032869">
    <property type="term" value="P:cellular response to insulin stimulus"/>
    <property type="evidence" value="ECO:0007669"/>
    <property type="project" value="Ensembl"/>
</dbReference>
<dbReference type="GO" id="GO:0044320">
    <property type="term" value="P:cellular response to leptin stimulus"/>
    <property type="evidence" value="ECO:0000250"/>
    <property type="project" value="UniProtKB"/>
</dbReference>
<dbReference type="GO" id="GO:0021954">
    <property type="term" value="P:central nervous system neuron development"/>
    <property type="evidence" value="ECO:0007669"/>
    <property type="project" value="Ensembl"/>
</dbReference>
<dbReference type="GO" id="GO:0008203">
    <property type="term" value="P:cholesterol metabolic process"/>
    <property type="evidence" value="ECO:0007669"/>
    <property type="project" value="Ensembl"/>
</dbReference>
<dbReference type="GO" id="GO:0008340">
    <property type="term" value="P:determination of adult lifespan"/>
    <property type="evidence" value="ECO:0007669"/>
    <property type="project" value="Ensembl"/>
</dbReference>
<dbReference type="GO" id="GO:0042755">
    <property type="term" value="P:eating behavior"/>
    <property type="evidence" value="ECO:0007669"/>
    <property type="project" value="Ensembl"/>
</dbReference>
<dbReference type="GO" id="GO:0051541">
    <property type="term" value="P:elastin metabolic process"/>
    <property type="evidence" value="ECO:0007669"/>
    <property type="project" value="Ensembl"/>
</dbReference>
<dbReference type="GO" id="GO:0006112">
    <property type="term" value="P:energy reserve metabolic process"/>
    <property type="evidence" value="ECO:0000318"/>
    <property type="project" value="GO_Central"/>
</dbReference>
<dbReference type="GO" id="GO:0006635">
    <property type="term" value="P:fatty acid beta-oxidation"/>
    <property type="evidence" value="ECO:0007669"/>
    <property type="project" value="Ensembl"/>
</dbReference>
<dbReference type="GO" id="GO:0042593">
    <property type="term" value="P:glucose homeostasis"/>
    <property type="evidence" value="ECO:0007669"/>
    <property type="project" value="Ensembl"/>
</dbReference>
<dbReference type="GO" id="GO:0006006">
    <property type="term" value="P:glucose metabolic process"/>
    <property type="evidence" value="ECO:0007669"/>
    <property type="project" value="Ensembl"/>
</dbReference>
<dbReference type="GO" id="GO:0042445">
    <property type="term" value="P:hormone metabolic process"/>
    <property type="evidence" value="ECO:0007669"/>
    <property type="project" value="Ensembl"/>
</dbReference>
<dbReference type="GO" id="GO:0030073">
    <property type="term" value="P:insulin secretion"/>
    <property type="evidence" value="ECO:0007669"/>
    <property type="project" value="Ensembl"/>
</dbReference>
<dbReference type="GO" id="GO:0050892">
    <property type="term" value="P:intestinal absorption"/>
    <property type="evidence" value="ECO:0000250"/>
    <property type="project" value="UniProtKB"/>
</dbReference>
<dbReference type="GO" id="GO:0033210">
    <property type="term" value="P:leptin-mediated signaling pathway"/>
    <property type="evidence" value="ECO:0000250"/>
    <property type="project" value="UniProtKB"/>
</dbReference>
<dbReference type="GO" id="GO:0006629">
    <property type="term" value="P:lipid metabolic process"/>
    <property type="evidence" value="ECO:0000318"/>
    <property type="project" value="GO_Central"/>
</dbReference>
<dbReference type="GO" id="GO:0032099">
    <property type="term" value="P:negative regulation of appetite"/>
    <property type="evidence" value="ECO:0000250"/>
    <property type="project" value="HGNC-UCL"/>
</dbReference>
<dbReference type="GO" id="GO:0038108">
    <property type="term" value="P:negative regulation of appetite by leptin-mediated signaling pathway"/>
    <property type="evidence" value="ECO:0000250"/>
    <property type="project" value="UniProtKB"/>
</dbReference>
<dbReference type="GO" id="GO:0010507">
    <property type="term" value="P:negative regulation of autophagy"/>
    <property type="evidence" value="ECO:0000250"/>
    <property type="project" value="UniProtKB"/>
</dbReference>
<dbReference type="GO" id="GO:0046325">
    <property type="term" value="P:negative regulation of D-glucose import"/>
    <property type="evidence" value="ECO:0000250"/>
    <property type="project" value="UniProtKB"/>
</dbReference>
<dbReference type="GO" id="GO:0070093">
    <property type="term" value="P:negative regulation of glucagon secretion"/>
    <property type="evidence" value="ECO:0007669"/>
    <property type="project" value="Ensembl"/>
</dbReference>
<dbReference type="GO" id="GO:0000122">
    <property type="term" value="P:negative regulation of transcription by RNA polymerase II"/>
    <property type="evidence" value="ECO:0007669"/>
    <property type="project" value="Ensembl"/>
</dbReference>
<dbReference type="GO" id="GO:0006909">
    <property type="term" value="P:phagocytosis"/>
    <property type="evidence" value="ECO:0000250"/>
    <property type="project" value="UniProtKB"/>
</dbReference>
<dbReference type="GO" id="GO:0001890">
    <property type="term" value="P:placenta development"/>
    <property type="evidence" value="ECO:0007669"/>
    <property type="project" value="Ensembl"/>
</dbReference>
<dbReference type="GO" id="GO:0120162">
    <property type="term" value="P:positive regulation of cold-induced thermogenesis"/>
    <property type="evidence" value="ECO:0007669"/>
    <property type="project" value="Ensembl"/>
</dbReference>
<dbReference type="GO" id="GO:0048639">
    <property type="term" value="P:positive regulation of developmental growth"/>
    <property type="evidence" value="ECO:0007669"/>
    <property type="project" value="Ensembl"/>
</dbReference>
<dbReference type="GO" id="GO:0032735">
    <property type="term" value="P:positive regulation of interleukin-12 production"/>
    <property type="evidence" value="ECO:0000250"/>
    <property type="project" value="UniProtKB"/>
</dbReference>
<dbReference type="GO" id="GO:0032755">
    <property type="term" value="P:positive regulation of interleukin-6 production"/>
    <property type="evidence" value="ECO:0000250"/>
    <property type="project" value="UniProtKB"/>
</dbReference>
<dbReference type="GO" id="GO:0032757">
    <property type="term" value="P:positive regulation of interleukin-8 production"/>
    <property type="evidence" value="ECO:0000250"/>
    <property type="project" value="UniProtKB"/>
</dbReference>
<dbReference type="GO" id="GO:0043410">
    <property type="term" value="P:positive regulation of MAPK cascade"/>
    <property type="evidence" value="ECO:0000250"/>
    <property type="project" value="UniProtKB"/>
</dbReference>
<dbReference type="GO" id="GO:1900745">
    <property type="term" value="P:positive regulation of p38MAPK cascade"/>
    <property type="evidence" value="ECO:0000250"/>
    <property type="project" value="UniProtKB"/>
</dbReference>
<dbReference type="GO" id="GO:0051897">
    <property type="term" value="P:positive regulation of phosphatidylinositol 3-kinase/protein kinase B signal transduction"/>
    <property type="evidence" value="ECO:0000250"/>
    <property type="project" value="UniProtKB"/>
</dbReference>
<dbReference type="GO" id="GO:0042307">
    <property type="term" value="P:positive regulation of protein import into nucleus"/>
    <property type="evidence" value="ECO:0007669"/>
    <property type="project" value="Ensembl"/>
</dbReference>
<dbReference type="GO" id="GO:0046427">
    <property type="term" value="P:positive regulation of receptor signaling pathway via JAK-STAT"/>
    <property type="evidence" value="ECO:0000250"/>
    <property type="project" value="UniProtKB"/>
</dbReference>
<dbReference type="GO" id="GO:0042102">
    <property type="term" value="P:positive regulation of T cell proliferation"/>
    <property type="evidence" value="ECO:0000250"/>
    <property type="project" value="UniProtKB"/>
</dbReference>
<dbReference type="GO" id="GO:0032008">
    <property type="term" value="P:positive regulation of TOR signaling"/>
    <property type="evidence" value="ECO:0000250"/>
    <property type="project" value="UniProtKB"/>
</dbReference>
<dbReference type="GO" id="GO:0032760">
    <property type="term" value="P:positive regulation of tumor necrosis factor production"/>
    <property type="evidence" value="ECO:0000250"/>
    <property type="project" value="UniProtKB"/>
</dbReference>
<dbReference type="GO" id="GO:0032310">
    <property type="term" value="P:prostaglandin secretion"/>
    <property type="evidence" value="ECO:0000250"/>
    <property type="project" value="UniProtKB"/>
</dbReference>
<dbReference type="GO" id="GO:0045765">
    <property type="term" value="P:regulation of angiogenesis"/>
    <property type="evidence" value="ECO:0000250"/>
    <property type="project" value="UniProtKB"/>
</dbReference>
<dbReference type="GO" id="GO:0046850">
    <property type="term" value="P:regulation of bone remodeling"/>
    <property type="evidence" value="ECO:0000250"/>
    <property type="project" value="UniProtKB"/>
</dbReference>
<dbReference type="GO" id="GO:0090335">
    <property type="term" value="P:regulation of brown fat cell differentiation"/>
    <property type="evidence" value="ECO:0000250"/>
    <property type="project" value="UniProtKB"/>
</dbReference>
<dbReference type="GO" id="GO:0051726">
    <property type="term" value="P:regulation of cell cycle"/>
    <property type="evidence" value="ECO:0000250"/>
    <property type="project" value="UniProtKB"/>
</dbReference>
<dbReference type="GO" id="GO:1900015">
    <property type="term" value="P:regulation of cytokine production involved in inflammatory response"/>
    <property type="evidence" value="ECO:0000250"/>
    <property type="project" value="UniProtKB"/>
</dbReference>
<dbReference type="GO" id="GO:0001936">
    <property type="term" value="P:regulation of endothelial cell proliferation"/>
    <property type="evidence" value="ECO:0000250"/>
    <property type="project" value="UniProtKB"/>
</dbReference>
<dbReference type="GO" id="GO:0006111">
    <property type="term" value="P:regulation of gluconeogenesis"/>
    <property type="evidence" value="ECO:0007669"/>
    <property type="project" value="Ensembl"/>
</dbReference>
<dbReference type="GO" id="GO:0050796">
    <property type="term" value="P:regulation of insulin secretion"/>
    <property type="evidence" value="ECO:0007669"/>
    <property type="project" value="Ensembl"/>
</dbReference>
<dbReference type="GO" id="GO:0030300">
    <property type="term" value="P:regulation of intestinal cholesterol absorption"/>
    <property type="evidence" value="ECO:0007669"/>
    <property type="project" value="Ensembl"/>
</dbReference>
<dbReference type="GO" id="GO:0032814">
    <property type="term" value="P:regulation of natural killer cell activation"/>
    <property type="evidence" value="ECO:0000250"/>
    <property type="project" value="UniProtKB"/>
</dbReference>
<dbReference type="GO" id="GO:0042269">
    <property type="term" value="P:regulation of natural killer cell mediated cytotoxicity"/>
    <property type="evidence" value="ECO:0000250"/>
    <property type="project" value="UniProtKB"/>
</dbReference>
<dbReference type="GO" id="GO:0032817">
    <property type="term" value="P:regulation of natural killer cell proliferation"/>
    <property type="evidence" value="ECO:0000250"/>
    <property type="project" value="UniProtKB"/>
</dbReference>
<dbReference type="GO" id="GO:0050999">
    <property type="term" value="P:regulation of nitric-oxide synthase activity"/>
    <property type="evidence" value="ECO:0000250"/>
    <property type="project" value="UniProtKB"/>
</dbReference>
<dbReference type="GO" id="GO:0050810">
    <property type="term" value="P:regulation of steroid biosynthetic process"/>
    <property type="evidence" value="ECO:0007669"/>
    <property type="project" value="Ensembl"/>
</dbReference>
<dbReference type="GO" id="GO:0002021">
    <property type="term" value="P:response to dietary excess"/>
    <property type="evidence" value="ECO:0007669"/>
    <property type="project" value="Ensembl"/>
</dbReference>
<dbReference type="GO" id="GO:0032868">
    <property type="term" value="P:response to insulin"/>
    <property type="evidence" value="ECO:0000250"/>
    <property type="project" value="AgBase"/>
</dbReference>
<dbReference type="GO" id="GO:0019953">
    <property type="term" value="P:sexual reproduction"/>
    <property type="evidence" value="ECO:0000250"/>
    <property type="project" value="UniProtKB"/>
</dbReference>
<dbReference type="GO" id="GO:0030217">
    <property type="term" value="P:T cell differentiation"/>
    <property type="evidence" value="ECO:0000250"/>
    <property type="project" value="UniProtKB"/>
</dbReference>
<dbReference type="FunFam" id="1.20.1250.10:FF:000008">
    <property type="entry name" value="Leptin"/>
    <property type="match status" value="1"/>
</dbReference>
<dbReference type="Gene3D" id="1.20.1250.10">
    <property type="match status" value="1"/>
</dbReference>
<dbReference type="InterPro" id="IPR009079">
    <property type="entry name" value="4_helix_cytokine-like_core"/>
</dbReference>
<dbReference type="InterPro" id="IPR000065">
    <property type="entry name" value="Leptin"/>
</dbReference>
<dbReference type="PANTHER" id="PTHR11724">
    <property type="entry name" value="LEPTIN"/>
    <property type="match status" value="1"/>
</dbReference>
<dbReference type="PANTHER" id="PTHR11724:SF1">
    <property type="entry name" value="LEPTIN"/>
    <property type="match status" value="1"/>
</dbReference>
<dbReference type="Pfam" id="PF02024">
    <property type="entry name" value="Leptin"/>
    <property type="match status" value="1"/>
</dbReference>
<dbReference type="PIRSF" id="PIRSF001837">
    <property type="entry name" value="Leptin"/>
    <property type="match status" value="1"/>
</dbReference>
<dbReference type="PRINTS" id="PR00495">
    <property type="entry name" value="LEPTIN"/>
</dbReference>
<dbReference type="SUPFAM" id="SSF47266">
    <property type="entry name" value="4-helical cytokines"/>
    <property type="match status" value="1"/>
</dbReference>
<keyword id="KW-1015">Disulfide bond</keyword>
<keyword id="KW-0550">Obesity</keyword>
<keyword id="KW-1185">Reference proteome</keyword>
<keyword id="KW-0964">Secreted</keyword>
<keyword id="KW-0732">Signal</keyword>
<sequence>MLCGPLCRFLWLWPYLSYVEAVPIRKVQDDTKTLIKTIVTRINDISHTQSVSSKQRVAGLDFIPGLHPVLSLSKMDQTLAIYQQILTGLPSRNVVQISNDLENLRDLLHLLASSKNCPLPRARGLETLESLGGALEASLYSTEVVALSRLQASLQDMLWRLDLSPGC</sequence>
<feature type="signal peptide" evidence="5">
    <location>
        <begin position="1"/>
        <end position="21"/>
    </location>
</feature>
<feature type="chain" id="PRO_0000017682" description="Leptin">
    <location>
        <begin position="22"/>
        <end position="167"/>
    </location>
</feature>
<feature type="disulfide bond" evidence="1">
    <location>
        <begin position="117"/>
        <end position="167"/>
    </location>
</feature>
<accession>Q9N2C1</accession>
<reference key="1">
    <citation type="submission" date="2000-04" db="EMBL/GenBank/DDBJ databases">
        <title>Molecular cloning of feline leptin cDNA.</title>
        <authorList>
            <person name="Sasaki N."/>
            <person name="Iwase M."/>
            <person name="Kimura K."/>
            <person name="Ohishi I."/>
            <person name="Saito M."/>
        </authorList>
    </citation>
    <scope>NUCLEOTIDE SEQUENCE [MRNA]</scope>
    <source>
        <tissue>White adipose tissue</tissue>
    </source>
</reference>
<organism>
    <name type="scientific">Felis catus</name>
    <name type="common">Cat</name>
    <name type="synonym">Felis silvestris catus</name>
    <dbReference type="NCBI Taxonomy" id="9685"/>
    <lineage>
        <taxon>Eukaryota</taxon>
        <taxon>Metazoa</taxon>
        <taxon>Chordata</taxon>
        <taxon>Craniata</taxon>
        <taxon>Vertebrata</taxon>
        <taxon>Euteleostomi</taxon>
        <taxon>Mammalia</taxon>
        <taxon>Eutheria</taxon>
        <taxon>Laurasiatheria</taxon>
        <taxon>Carnivora</taxon>
        <taxon>Feliformia</taxon>
        <taxon>Felidae</taxon>
        <taxon>Felinae</taxon>
        <taxon>Felis</taxon>
    </lineage>
</organism>
<name>LEP_FELCA</name>
<protein>
    <recommendedName>
        <fullName>Leptin</fullName>
    </recommendedName>
    <alternativeName>
        <fullName>Obesity factor</fullName>
    </alternativeName>
</protein>
<gene>
    <name type="primary">LEP</name>
    <name type="synonym">OB</name>
</gene>
<comment type="function">
    <text evidence="2 3 4">Key player in the regulation of energy balance and body weight control. Once released into the circulation, has central and peripheral effects by binding LEPR, found in many tissues, which results in the activation of several major signaling pathways (By similarity). In the hypothalamus, acts as an appetite-regulating factor that induces a decrease in food intake and an increase in energy consumption by inducing anorexinogenic factors and suppressing orexigenic neuropeptides, also regulates bone mass and secretion of hypothalamo-pituitary-adrenal hormones. In the periphery, increases basal metabolism, influences reproductive function, regulates pancreatic beta-cell function and insulin secretion, is pro-angiogenic for endothelial cell and affects innate and adaptive immunity (By similarity). In the arcuate nucleus of the hypothalamus, activates by depolarization POMC neurons inducing FOS and SOCS3 expression to release anorexigenic peptides and inhibits by hyperpolarization NPY neurons inducing SOCS3 with a consequent reduction on release of orexigenic peptides (By similarity). In addition to its known satiety inducing effect, has a modulatory role in nutrient absorption. In the intestine, reduces glucose absorption by enterocytes by activating PKC and leading to a sequential activation of p38, PI3K and ERK signaling pathways which exerts an inhibitory effect on glucose absorption (By similarity). Acts as a growth factor on certain tissues, through the activation of different signaling pathways increases expression of genes involved in cell cycle regulation such as CCND1, via JAK2-STAT3 pathway, or VEGFA, via MAPK1/3 and PI3K-AKT1 pathways (By similarity). May also play an apoptotic role via JAK2-STAT3 pathway and up-regulation of BIRC5 expression. Pro-angiogenic, has mitogenic activity on vascular endothelial cells and plays a role in matrix remodeling by regulating the expression of matrix metalloproteinases (MMPs) and tissue inhibitors of metalloproteinases (TIMPs). In innate immunity, modulates the activity and function of neutrophils by increasing chemotaxis and the secretion of oxygen radicals. Increases phagocytosis by macrophages and enhances secretion of pro-inflammatory mediators. Increases cytotoxic ability of NK cells. Plays a pro-inflammatory role, in synergy with IL1B, by inducing NOS2 which promotes the production of IL6, IL8 and Prostaglandin E2, through a signaling pathway that involves JAK2, PI3K, MAP2K1/MEK1 and MAPK14/p38 (By similarity). In adaptive immunity, promotes the switch of memory T-cells towards T helper-1 cell immune responses (By similarity). Increases CD4(+)CD25(-) T-cell proliferation and reduces autophagy during TCR (T-cell receptor) stimulation, through MTOR signaling pathway activation and BCL2 up-regulation (By similarity).</text>
</comment>
<comment type="subcellular location">
    <subcellularLocation>
        <location evidence="2">Secreted</location>
    </subcellularLocation>
</comment>
<comment type="similarity">
    <text evidence="6">Belongs to the leptin family.</text>
</comment>
<proteinExistence type="evidence at transcript level"/>